<name>PHNC_STAAB</name>
<gene>
    <name evidence="1" type="primary">phnC</name>
    <name type="ordered locus">SAB0083c</name>
</gene>
<evidence type="ECO:0000255" key="1">
    <source>
        <dbReference type="HAMAP-Rule" id="MF_01713"/>
    </source>
</evidence>
<comment type="function">
    <text evidence="1">Part of the ABC transporter complex PhnCDE involved in phosphonates import. Responsible for energy coupling to the transport system.</text>
</comment>
<comment type="catalytic activity">
    <reaction evidence="1">
        <text>phosphonate(out) + ATP + H2O = phosphonate(in) + ADP + phosphate + H(+)</text>
        <dbReference type="Rhea" id="RHEA:18065"/>
        <dbReference type="ChEBI" id="CHEBI:15377"/>
        <dbReference type="ChEBI" id="CHEBI:15378"/>
        <dbReference type="ChEBI" id="CHEBI:16215"/>
        <dbReference type="ChEBI" id="CHEBI:30616"/>
        <dbReference type="ChEBI" id="CHEBI:43474"/>
        <dbReference type="ChEBI" id="CHEBI:456216"/>
        <dbReference type="EC" id="7.3.2.2"/>
    </reaction>
</comment>
<comment type="subunit">
    <text evidence="1">The complex is composed of two ATP-binding proteins (PhnC), two transmembrane proteins (PhnE) and a solute-binding protein (PhnD).</text>
</comment>
<comment type="subcellular location">
    <subcellularLocation>
        <location evidence="1">Cell membrane</location>
        <topology evidence="1">Peripheral membrane protein</topology>
    </subcellularLocation>
</comment>
<comment type="similarity">
    <text evidence="1">Belongs to the ABC transporter superfamily. Phosphonates importer (TC 3.A.1.9.1) family.</text>
</comment>
<dbReference type="EC" id="7.3.2.2" evidence="1"/>
<dbReference type="EMBL" id="AJ938182">
    <property type="protein sequence ID" value="CAI79771.1"/>
    <property type="molecule type" value="Genomic_DNA"/>
</dbReference>
<dbReference type="RefSeq" id="WP_000078088.1">
    <property type="nucleotide sequence ID" value="NC_007622.1"/>
</dbReference>
<dbReference type="SMR" id="Q2YUY7"/>
<dbReference type="KEGG" id="sab:SAB0083c"/>
<dbReference type="HOGENOM" id="CLU_000604_1_22_9"/>
<dbReference type="GO" id="GO:0005886">
    <property type="term" value="C:plasma membrane"/>
    <property type="evidence" value="ECO:0007669"/>
    <property type="project" value="UniProtKB-SubCell"/>
</dbReference>
<dbReference type="GO" id="GO:0015416">
    <property type="term" value="F:ABC-type phosphonate transporter activity"/>
    <property type="evidence" value="ECO:0007669"/>
    <property type="project" value="UniProtKB-EC"/>
</dbReference>
<dbReference type="GO" id="GO:0005524">
    <property type="term" value="F:ATP binding"/>
    <property type="evidence" value="ECO:0007669"/>
    <property type="project" value="UniProtKB-KW"/>
</dbReference>
<dbReference type="GO" id="GO:0016887">
    <property type="term" value="F:ATP hydrolysis activity"/>
    <property type="evidence" value="ECO:0007669"/>
    <property type="project" value="InterPro"/>
</dbReference>
<dbReference type="CDD" id="cd03256">
    <property type="entry name" value="ABC_PhnC_transporter"/>
    <property type="match status" value="1"/>
</dbReference>
<dbReference type="Gene3D" id="3.40.50.300">
    <property type="entry name" value="P-loop containing nucleotide triphosphate hydrolases"/>
    <property type="match status" value="1"/>
</dbReference>
<dbReference type="InterPro" id="IPR003593">
    <property type="entry name" value="AAA+_ATPase"/>
</dbReference>
<dbReference type="InterPro" id="IPR003439">
    <property type="entry name" value="ABC_transporter-like_ATP-bd"/>
</dbReference>
<dbReference type="InterPro" id="IPR017871">
    <property type="entry name" value="ABC_transporter-like_CS"/>
</dbReference>
<dbReference type="InterPro" id="IPR012693">
    <property type="entry name" value="ABC_transpr_PhnC"/>
</dbReference>
<dbReference type="InterPro" id="IPR050086">
    <property type="entry name" value="MetN_ABC_transporter-like"/>
</dbReference>
<dbReference type="InterPro" id="IPR027417">
    <property type="entry name" value="P-loop_NTPase"/>
</dbReference>
<dbReference type="NCBIfam" id="TIGR02315">
    <property type="entry name" value="ABC_phnC"/>
    <property type="match status" value="1"/>
</dbReference>
<dbReference type="PANTHER" id="PTHR43166">
    <property type="entry name" value="AMINO ACID IMPORT ATP-BINDING PROTEIN"/>
    <property type="match status" value="1"/>
</dbReference>
<dbReference type="PANTHER" id="PTHR43166:SF6">
    <property type="entry name" value="PHOSPHONATES IMPORT ATP-BINDING PROTEIN PHNC"/>
    <property type="match status" value="1"/>
</dbReference>
<dbReference type="Pfam" id="PF00005">
    <property type="entry name" value="ABC_tran"/>
    <property type="match status" value="1"/>
</dbReference>
<dbReference type="SMART" id="SM00382">
    <property type="entry name" value="AAA"/>
    <property type="match status" value="1"/>
</dbReference>
<dbReference type="SUPFAM" id="SSF52540">
    <property type="entry name" value="P-loop containing nucleoside triphosphate hydrolases"/>
    <property type="match status" value="1"/>
</dbReference>
<dbReference type="PROSITE" id="PS00211">
    <property type="entry name" value="ABC_TRANSPORTER_1"/>
    <property type="match status" value="1"/>
</dbReference>
<dbReference type="PROSITE" id="PS50893">
    <property type="entry name" value="ABC_TRANSPORTER_2"/>
    <property type="match status" value="1"/>
</dbReference>
<dbReference type="PROSITE" id="PS51249">
    <property type="entry name" value="PHNC"/>
    <property type="match status" value="1"/>
</dbReference>
<reference key="1">
    <citation type="journal article" date="2007" name="PLoS ONE">
        <title>Molecular correlates of host specialization in Staphylococcus aureus.</title>
        <authorList>
            <person name="Herron-Olson L."/>
            <person name="Fitzgerald J.R."/>
            <person name="Musser J.M."/>
            <person name="Kapur V."/>
        </authorList>
    </citation>
    <scope>NUCLEOTIDE SEQUENCE [LARGE SCALE GENOMIC DNA]</scope>
    <source>
        <strain>bovine RF122 / ET3-1</strain>
    </source>
</reference>
<protein>
    <recommendedName>
        <fullName evidence="1">Phosphonates import ATP-binding protein PhnC</fullName>
        <ecNumber evidence="1">7.3.2.2</ecNumber>
    </recommendedName>
</protein>
<proteinExistence type="inferred from homology"/>
<sequence>MSQIEFKNVSKVYPNCHVGLKNINLNIEKGEFAVIVGLSGAGKSTLLRSVNRLHDITSGEIFIQGKSITKAHGKALLKMRRNIGMIFQHFNLVKRSSVLRNVLSGRVGYHPTWKMVLGLFPKEDKIKAMDALERVNILDKYNQRSDELSGGQQQRISIARALCQESEIILADEPVASLDPLTTKQVMDDLRKINQELGITILINLHFVDLAKEYGTRIIGLRDGEVVYDGPASEATDDIFSEIYGRTIKEDEKLGVN</sequence>
<accession>Q2YUY7</accession>
<organism>
    <name type="scientific">Staphylococcus aureus (strain bovine RF122 / ET3-1)</name>
    <dbReference type="NCBI Taxonomy" id="273036"/>
    <lineage>
        <taxon>Bacteria</taxon>
        <taxon>Bacillati</taxon>
        <taxon>Bacillota</taxon>
        <taxon>Bacilli</taxon>
        <taxon>Bacillales</taxon>
        <taxon>Staphylococcaceae</taxon>
        <taxon>Staphylococcus</taxon>
    </lineage>
</organism>
<keyword id="KW-0067">ATP-binding</keyword>
<keyword id="KW-1003">Cell membrane</keyword>
<keyword id="KW-0472">Membrane</keyword>
<keyword id="KW-0547">Nucleotide-binding</keyword>
<keyword id="KW-0918">Phosphonate transport</keyword>
<keyword id="KW-1278">Translocase</keyword>
<keyword id="KW-0813">Transport</keyword>
<feature type="chain" id="PRO_0000274757" description="Phosphonates import ATP-binding protein PhnC">
    <location>
        <begin position="1"/>
        <end position="257"/>
    </location>
</feature>
<feature type="domain" description="ABC transporter" evidence="1">
    <location>
        <begin position="4"/>
        <end position="248"/>
    </location>
</feature>
<feature type="binding site" evidence="1">
    <location>
        <begin position="37"/>
        <end position="44"/>
    </location>
    <ligand>
        <name>ATP</name>
        <dbReference type="ChEBI" id="CHEBI:30616"/>
    </ligand>
</feature>